<feature type="propeptide" id="PRO_0000300005" evidence="2">
    <location>
        <begin position="1"/>
        <end position="2"/>
    </location>
</feature>
<feature type="chain" id="PRO_0000300006" description="Ribulose bisphosphate carboxylase large chain">
    <location>
        <begin position="3"/>
        <end position="479"/>
    </location>
</feature>
<feature type="active site" description="Proton acceptor" evidence="2">
    <location>
        <position position="175"/>
    </location>
</feature>
<feature type="active site" description="Proton acceptor" evidence="2">
    <location>
        <position position="294"/>
    </location>
</feature>
<feature type="binding site" description="in homodimeric partner" evidence="2">
    <location>
        <position position="123"/>
    </location>
    <ligand>
        <name>substrate</name>
    </ligand>
</feature>
<feature type="binding site" evidence="2">
    <location>
        <position position="173"/>
    </location>
    <ligand>
        <name>substrate</name>
    </ligand>
</feature>
<feature type="binding site" evidence="2">
    <location>
        <position position="177"/>
    </location>
    <ligand>
        <name>substrate</name>
    </ligand>
</feature>
<feature type="binding site" description="via carbamate group" evidence="2">
    <location>
        <position position="201"/>
    </location>
    <ligand>
        <name>Mg(2+)</name>
        <dbReference type="ChEBI" id="CHEBI:18420"/>
    </ligand>
</feature>
<feature type="binding site" evidence="2">
    <location>
        <position position="203"/>
    </location>
    <ligand>
        <name>Mg(2+)</name>
        <dbReference type="ChEBI" id="CHEBI:18420"/>
    </ligand>
</feature>
<feature type="binding site" evidence="2">
    <location>
        <position position="204"/>
    </location>
    <ligand>
        <name>Mg(2+)</name>
        <dbReference type="ChEBI" id="CHEBI:18420"/>
    </ligand>
</feature>
<feature type="binding site" evidence="2">
    <location>
        <position position="295"/>
    </location>
    <ligand>
        <name>substrate</name>
    </ligand>
</feature>
<feature type="binding site" evidence="2">
    <location>
        <position position="327"/>
    </location>
    <ligand>
        <name>substrate</name>
    </ligand>
</feature>
<feature type="binding site" evidence="2">
    <location>
        <position position="379"/>
    </location>
    <ligand>
        <name>substrate</name>
    </ligand>
</feature>
<feature type="site" description="Transition state stabilizer" evidence="2">
    <location>
        <position position="334"/>
    </location>
</feature>
<feature type="modified residue" description="N6-carboxylysine" evidence="2">
    <location>
        <position position="201"/>
    </location>
</feature>
<feature type="modified residue" description="Phosphoserine" evidence="1">
    <location>
        <position position="208"/>
    </location>
</feature>
<feature type="modified residue" description="Phosphothreonine" evidence="1">
    <location>
        <position position="330"/>
    </location>
</feature>
<feature type="disulfide bond" description="Interchain; in linked form" evidence="2">
    <location>
        <position position="247"/>
    </location>
</feature>
<reference key="1">
    <citation type="submission" date="2007-03" db="EMBL/GenBank/DDBJ databases">
        <title>Sequence analysis of Arabidopsis pumila JS2 chloroplast DNA.</title>
        <authorList>
            <person name="Hosouchi T."/>
            <person name="Tsuruoka H."/>
            <person name="Kotani H."/>
        </authorList>
    </citation>
    <scope>NUCLEOTIDE SEQUENCE [LARGE SCALE GENOMIC DNA]</scope>
</reference>
<geneLocation type="chloroplast"/>
<comment type="function">
    <text evidence="2">RuBisCO catalyzes two reactions: the carboxylation of D-ribulose 1,5-bisphosphate, the primary event in carbon dioxide fixation, as well as the oxidative fragmentation of the pentose substrate in the photorespiration process. Both reactions occur simultaneously and in competition at the same active site.</text>
</comment>
<comment type="catalytic activity">
    <reaction evidence="2">
        <text>2 (2R)-3-phosphoglycerate + 2 H(+) = D-ribulose 1,5-bisphosphate + CO2 + H2O</text>
        <dbReference type="Rhea" id="RHEA:23124"/>
        <dbReference type="ChEBI" id="CHEBI:15377"/>
        <dbReference type="ChEBI" id="CHEBI:15378"/>
        <dbReference type="ChEBI" id="CHEBI:16526"/>
        <dbReference type="ChEBI" id="CHEBI:57870"/>
        <dbReference type="ChEBI" id="CHEBI:58272"/>
        <dbReference type="EC" id="4.1.1.39"/>
    </reaction>
</comment>
<comment type="catalytic activity">
    <reaction evidence="2">
        <text>D-ribulose 1,5-bisphosphate + O2 = 2-phosphoglycolate + (2R)-3-phosphoglycerate + 2 H(+)</text>
        <dbReference type="Rhea" id="RHEA:36631"/>
        <dbReference type="ChEBI" id="CHEBI:15378"/>
        <dbReference type="ChEBI" id="CHEBI:15379"/>
        <dbReference type="ChEBI" id="CHEBI:57870"/>
        <dbReference type="ChEBI" id="CHEBI:58033"/>
        <dbReference type="ChEBI" id="CHEBI:58272"/>
    </reaction>
</comment>
<comment type="cofactor">
    <cofactor evidence="2">
        <name>Mg(2+)</name>
        <dbReference type="ChEBI" id="CHEBI:18420"/>
    </cofactor>
    <text evidence="2">Binds 1 Mg(2+) ion per subunit.</text>
</comment>
<comment type="subunit">
    <text evidence="2">Heterohexadecamer of 8 large chains and 8 small chains; disulfide-linked. The disulfide link is formed within the large subunit homodimers.</text>
</comment>
<comment type="subcellular location">
    <subcellularLocation>
        <location>Plastid</location>
        <location>Chloroplast</location>
    </subcellularLocation>
</comment>
<comment type="PTM">
    <text evidence="2">The disulfide bond which can form in the large chain dimeric partners within the hexadecamer appears to be associated with oxidative stress and protein turnover.</text>
</comment>
<comment type="miscellaneous">
    <text evidence="2">The basic functional RuBisCO is composed of a large chain homodimer in a 'head-to-tail' conformation. In form I RuBisCO this homodimer is arranged in a barrel-like tetramer with the small subunits forming a tetrameric 'cap' on each end of the 'barrel'.</text>
</comment>
<comment type="similarity">
    <text evidence="2">Belongs to the RuBisCO large chain family. Type I subfamily.</text>
</comment>
<sequence>MSPQTETKASVGFKAGVKEYKLTYYTPEYETKDTDILAAFRVTPQPGVPPEEAGAAVAAESSTGTWTTVWTDGLTSLDRYKGRCYHIEPVPGEETQFIAYVAYPLDLFEEGSVTNMFTSIVGNVFGFKALAALRLEDLRIPPAYTKTFQGPPHGIQVERDKLNKYGRPLLGCTIKPKLGLSAKNYGRAVYECLRGGLDFTKDDENVNSQPFMRWRDRFLFCAEAIYKSQAETGEIKGHYLNATAGTCEEMIKRAVFARELGVPIVMHDYLTGGFTANTSLSHYCRDNGLLLHIHRAMHAVIDRQKNHGMHFRVLAKALRLSGGDHVHAGTVVGKLEGDRESTLGFVDLLRDDYIEKDRSRGIFFTQDWVSLPGVLPVASGGIHVWHMPALTEIFGDDSVLQFGGGTLGHPWGNAPGAVANRVALEACVQARNEGRDLAVEGNEIIREACKWSPELAAACEVWKEIRFNFPTVDTLDDQA</sequence>
<gene>
    <name evidence="2" type="primary">rbcL</name>
</gene>
<proteinExistence type="inferred from homology"/>
<keyword id="KW-0113">Calvin cycle</keyword>
<keyword id="KW-0120">Carbon dioxide fixation</keyword>
<keyword id="KW-0150">Chloroplast</keyword>
<keyword id="KW-1015">Disulfide bond</keyword>
<keyword id="KW-0456">Lyase</keyword>
<keyword id="KW-0460">Magnesium</keyword>
<keyword id="KW-0479">Metal-binding</keyword>
<keyword id="KW-0503">Monooxygenase</keyword>
<keyword id="KW-0560">Oxidoreductase</keyword>
<keyword id="KW-0597">Phosphoprotein</keyword>
<keyword id="KW-0601">Photorespiration</keyword>
<keyword id="KW-0602">Photosynthesis</keyword>
<keyword id="KW-0934">Plastid</keyword>
<organism>
    <name type="scientific">Olimarabidopsis pumila</name>
    <name type="common">Dwarf rocket</name>
    <name type="synonym">Arabidopsis griffithiana</name>
    <dbReference type="NCBI Taxonomy" id="74718"/>
    <lineage>
        <taxon>Eukaryota</taxon>
        <taxon>Viridiplantae</taxon>
        <taxon>Streptophyta</taxon>
        <taxon>Embryophyta</taxon>
        <taxon>Tracheophyta</taxon>
        <taxon>Spermatophyta</taxon>
        <taxon>Magnoliopsida</taxon>
        <taxon>eudicotyledons</taxon>
        <taxon>Gunneridae</taxon>
        <taxon>Pentapetalae</taxon>
        <taxon>rosids</taxon>
        <taxon>malvids</taxon>
        <taxon>Brassicales</taxon>
        <taxon>Brassicaceae</taxon>
        <taxon>Alyssopsideae</taxon>
        <taxon>Olimarabidopsis</taxon>
    </lineage>
</organism>
<protein>
    <recommendedName>
        <fullName evidence="2">Ribulose bisphosphate carboxylase large chain</fullName>
        <shortName evidence="2">RuBisCO large subunit</shortName>
        <ecNumber evidence="2">4.1.1.39</ecNumber>
    </recommendedName>
</protein>
<dbReference type="EC" id="4.1.1.39" evidence="2"/>
<dbReference type="EMBL" id="AP009368">
    <property type="protein sequence ID" value="BAF49947.1"/>
    <property type="molecule type" value="Genomic_DNA"/>
</dbReference>
<dbReference type="RefSeq" id="YP_001123123.1">
    <property type="nucleotide sequence ID" value="NC_009267.1"/>
</dbReference>
<dbReference type="SMR" id="A4QJU1"/>
<dbReference type="GeneID" id="4962430"/>
<dbReference type="GO" id="GO:0009507">
    <property type="term" value="C:chloroplast"/>
    <property type="evidence" value="ECO:0007669"/>
    <property type="project" value="UniProtKB-SubCell"/>
</dbReference>
<dbReference type="GO" id="GO:0000287">
    <property type="term" value="F:magnesium ion binding"/>
    <property type="evidence" value="ECO:0007669"/>
    <property type="project" value="UniProtKB-UniRule"/>
</dbReference>
<dbReference type="GO" id="GO:0004497">
    <property type="term" value="F:monooxygenase activity"/>
    <property type="evidence" value="ECO:0007669"/>
    <property type="project" value="UniProtKB-KW"/>
</dbReference>
<dbReference type="GO" id="GO:0016984">
    <property type="term" value="F:ribulose-bisphosphate carboxylase activity"/>
    <property type="evidence" value="ECO:0007669"/>
    <property type="project" value="UniProtKB-UniRule"/>
</dbReference>
<dbReference type="GO" id="GO:0009853">
    <property type="term" value="P:photorespiration"/>
    <property type="evidence" value="ECO:0007669"/>
    <property type="project" value="UniProtKB-KW"/>
</dbReference>
<dbReference type="GO" id="GO:0019253">
    <property type="term" value="P:reductive pentose-phosphate cycle"/>
    <property type="evidence" value="ECO:0007669"/>
    <property type="project" value="UniProtKB-UniRule"/>
</dbReference>
<dbReference type="CDD" id="cd08212">
    <property type="entry name" value="RuBisCO_large_I"/>
    <property type="match status" value="1"/>
</dbReference>
<dbReference type="FunFam" id="3.20.20.110:FF:000001">
    <property type="entry name" value="Ribulose bisphosphate carboxylase large chain"/>
    <property type="match status" value="1"/>
</dbReference>
<dbReference type="FunFam" id="3.30.70.150:FF:000001">
    <property type="entry name" value="Ribulose bisphosphate carboxylase large chain"/>
    <property type="match status" value="1"/>
</dbReference>
<dbReference type="Gene3D" id="3.20.20.110">
    <property type="entry name" value="Ribulose bisphosphate carboxylase, large subunit, C-terminal domain"/>
    <property type="match status" value="1"/>
</dbReference>
<dbReference type="Gene3D" id="3.30.70.150">
    <property type="entry name" value="RuBisCO large subunit, N-terminal domain"/>
    <property type="match status" value="1"/>
</dbReference>
<dbReference type="HAMAP" id="MF_01338">
    <property type="entry name" value="RuBisCO_L_type1"/>
    <property type="match status" value="1"/>
</dbReference>
<dbReference type="InterPro" id="IPR033966">
    <property type="entry name" value="RuBisCO"/>
</dbReference>
<dbReference type="InterPro" id="IPR020878">
    <property type="entry name" value="RuBisCo_large_chain_AS"/>
</dbReference>
<dbReference type="InterPro" id="IPR000685">
    <property type="entry name" value="RuBisCO_lsu_C"/>
</dbReference>
<dbReference type="InterPro" id="IPR036376">
    <property type="entry name" value="RuBisCO_lsu_C_sf"/>
</dbReference>
<dbReference type="InterPro" id="IPR017443">
    <property type="entry name" value="RuBisCO_lsu_fd_N"/>
</dbReference>
<dbReference type="InterPro" id="IPR036422">
    <property type="entry name" value="RuBisCO_lsu_N_sf"/>
</dbReference>
<dbReference type="InterPro" id="IPR020888">
    <property type="entry name" value="RuBisCO_lsuI"/>
</dbReference>
<dbReference type="NCBIfam" id="NF003252">
    <property type="entry name" value="PRK04208.1"/>
    <property type="match status" value="1"/>
</dbReference>
<dbReference type="PANTHER" id="PTHR42704">
    <property type="entry name" value="RIBULOSE BISPHOSPHATE CARBOXYLASE"/>
    <property type="match status" value="1"/>
</dbReference>
<dbReference type="PANTHER" id="PTHR42704:SF16">
    <property type="entry name" value="RIBULOSE BISPHOSPHATE CARBOXYLASE LARGE CHAIN"/>
    <property type="match status" value="1"/>
</dbReference>
<dbReference type="Pfam" id="PF00016">
    <property type="entry name" value="RuBisCO_large"/>
    <property type="match status" value="1"/>
</dbReference>
<dbReference type="Pfam" id="PF02788">
    <property type="entry name" value="RuBisCO_large_N"/>
    <property type="match status" value="1"/>
</dbReference>
<dbReference type="SFLD" id="SFLDG01052">
    <property type="entry name" value="RuBisCO"/>
    <property type="match status" value="1"/>
</dbReference>
<dbReference type="SFLD" id="SFLDS00014">
    <property type="entry name" value="RuBisCO"/>
    <property type="match status" value="1"/>
</dbReference>
<dbReference type="SFLD" id="SFLDG00301">
    <property type="entry name" value="RuBisCO-like_proteins"/>
    <property type="match status" value="1"/>
</dbReference>
<dbReference type="SUPFAM" id="SSF51649">
    <property type="entry name" value="RuBisCo, C-terminal domain"/>
    <property type="match status" value="1"/>
</dbReference>
<dbReference type="SUPFAM" id="SSF54966">
    <property type="entry name" value="RuBisCO, large subunit, small (N-terminal) domain"/>
    <property type="match status" value="1"/>
</dbReference>
<dbReference type="PROSITE" id="PS00157">
    <property type="entry name" value="RUBISCO_LARGE"/>
    <property type="match status" value="1"/>
</dbReference>
<evidence type="ECO:0000250" key="1">
    <source>
        <dbReference type="UniProtKB" id="O03042"/>
    </source>
</evidence>
<evidence type="ECO:0000255" key="2">
    <source>
        <dbReference type="HAMAP-Rule" id="MF_01338"/>
    </source>
</evidence>
<accession>A4QJU1</accession>
<name>RBL_OLIPU</name>